<sequence length="454" mass="47780">MSRPTVSLIVLAAGQGTRMNSDLPKVLHRVGAAPMLHHALRAGQSLEPERVVVVAGHGAEQVARAARAFDETVEVVVQAEQLGTAHAVAQAAPLLADAPGEVVVLYGDTPFIRPETLERMIEMRARHAVVVLGFEAADPGRYGRLVTRGEDLDRIVEWKDATDEERAITLCNSGVICAETHLLFSLVSEVGNANAAGEYYLTDVVALARAKGLSAGVAICDEAETLGVNTRAQLAAAEAEFQRRARAAALEDGVTLTAPDTVFFALDTFLGRDAIVGPNVVFGPGVTVESGAEIRAFCHLEGCHISRGATVGPFARLRPGAELAEDVHVGNFVEIKNAVLDEGVKVGHLTYLGDAHVGEHTNIGAGTVTCNYDGVNKHRTEIGAHAFIGSDTMLVAPVSVGARAMTASGSVITEDVPAEALAVGRARQVTKPGLATRLMEMFRAARDASKKGTN</sequence>
<reference key="1">
    <citation type="submission" date="2007-04" db="EMBL/GenBank/DDBJ databases">
        <title>Complete sequence of chromosome of Rhodobacter sphaeroides ATCC 17025.</title>
        <authorList>
            <consortium name="US DOE Joint Genome Institute"/>
            <person name="Copeland A."/>
            <person name="Lucas S."/>
            <person name="Lapidus A."/>
            <person name="Barry K."/>
            <person name="Detter J.C."/>
            <person name="Glavina del Rio T."/>
            <person name="Hammon N."/>
            <person name="Israni S."/>
            <person name="Dalin E."/>
            <person name="Tice H."/>
            <person name="Pitluck S."/>
            <person name="Chertkov O."/>
            <person name="Brettin T."/>
            <person name="Bruce D."/>
            <person name="Han C."/>
            <person name="Schmutz J."/>
            <person name="Larimer F."/>
            <person name="Land M."/>
            <person name="Hauser L."/>
            <person name="Kyrpides N."/>
            <person name="Kim E."/>
            <person name="Richardson P."/>
            <person name="Mackenzie C."/>
            <person name="Choudhary M."/>
            <person name="Donohue T.J."/>
            <person name="Kaplan S."/>
        </authorList>
    </citation>
    <scope>NUCLEOTIDE SEQUENCE [LARGE SCALE GENOMIC DNA]</scope>
    <source>
        <strain>ATCC 17025 / ATH 2.4.3</strain>
    </source>
</reference>
<keyword id="KW-0012">Acyltransferase</keyword>
<keyword id="KW-0133">Cell shape</keyword>
<keyword id="KW-0961">Cell wall biogenesis/degradation</keyword>
<keyword id="KW-0963">Cytoplasm</keyword>
<keyword id="KW-0460">Magnesium</keyword>
<keyword id="KW-0479">Metal-binding</keyword>
<keyword id="KW-0511">Multifunctional enzyme</keyword>
<keyword id="KW-0548">Nucleotidyltransferase</keyword>
<keyword id="KW-0573">Peptidoglycan synthesis</keyword>
<keyword id="KW-0677">Repeat</keyword>
<keyword id="KW-0808">Transferase</keyword>
<gene>
    <name evidence="1" type="primary">glmU</name>
    <name type="ordered locus">Rsph17025_2016</name>
</gene>
<protein>
    <recommendedName>
        <fullName evidence="1">Bifunctional protein GlmU</fullName>
    </recommendedName>
    <domain>
        <recommendedName>
            <fullName evidence="1">UDP-N-acetylglucosamine pyrophosphorylase</fullName>
            <ecNumber evidence="1">2.7.7.23</ecNumber>
        </recommendedName>
        <alternativeName>
            <fullName evidence="1">N-acetylglucosamine-1-phosphate uridyltransferase</fullName>
        </alternativeName>
    </domain>
    <domain>
        <recommendedName>
            <fullName evidence="1">Glucosamine-1-phosphate N-acetyltransferase</fullName>
            <ecNumber evidence="1">2.3.1.157</ecNumber>
        </recommendedName>
    </domain>
</protein>
<evidence type="ECO:0000255" key="1">
    <source>
        <dbReference type="HAMAP-Rule" id="MF_01631"/>
    </source>
</evidence>
<feature type="chain" id="PRO_1000056193" description="Bifunctional protein GlmU">
    <location>
        <begin position="1"/>
        <end position="454"/>
    </location>
</feature>
<feature type="region of interest" description="Pyrophosphorylase" evidence="1">
    <location>
        <begin position="1"/>
        <end position="231"/>
    </location>
</feature>
<feature type="region of interest" description="Linker" evidence="1">
    <location>
        <begin position="232"/>
        <end position="252"/>
    </location>
</feature>
<feature type="region of interest" description="N-acetyltransferase" evidence="1">
    <location>
        <begin position="253"/>
        <end position="454"/>
    </location>
</feature>
<feature type="active site" description="Proton acceptor" evidence="1">
    <location>
        <position position="348"/>
    </location>
</feature>
<feature type="binding site" evidence="1">
    <location>
        <begin position="11"/>
        <end position="14"/>
    </location>
    <ligand>
        <name>UDP-N-acetyl-alpha-D-glucosamine</name>
        <dbReference type="ChEBI" id="CHEBI:57705"/>
    </ligand>
</feature>
<feature type="binding site" evidence="1">
    <location>
        <position position="25"/>
    </location>
    <ligand>
        <name>UDP-N-acetyl-alpha-D-glucosamine</name>
        <dbReference type="ChEBI" id="CHEBI:57705"/>
    </ligand>
</feature>
<feature type="binding site" evidence="1">
    <location>
        <position position="78"/>
    </location>
    <ligand>
        <name>UDP-N-acetyl-alpha-D-glucosamine</name>
        <dbReference type="ChEBI" id="CHEBI:57705"/>
    </ligand>
</feature>
<feature type="binding site" evidence="1">
    <location>
        <begin position="83"/>
        <end position="84"/>
    </location>
    <ligand>
        <name>UDP-N-acetyl-alpha-D-glucosamine</name>
        <dbReference type="ChEBI" id="CHEBI:57705"/>
    </ligand>
</feature>
<feature type="binding site" evidence="1">
    <location>
        <begin position="106"/>
        <end position="108"/>
    </location>
    <ligand>
        <name>UDP-N-acetyl-alpha-D-glucosamine</name>
        <dbReference type="ChEBI" id="CHEBI:57705"/>
    </ligand>
</feature>
<feature type="binding site" evidence="1">
    <location>
        <position position="108"/>
    </location>
    <ligand>
        <name>Mg(2+)</name>
        <dbReference type="ChEBI" id="CHEBI:18420"/>
    </ligand>
</feature>
<feature type="binding site" evidence="1">
    <location>
        <position position="143"/>
    </location>
    <ligand>
        <name>UDP-N-acetyl-alpha-D-glucosamine</name>
        <dbReference type="ChEBI" id="CHEBI:57705"/>
    </ligand>
</feature>
<feature type="binding site" evidence="1">
    <location>
        <position position="157"/>
    </location>
    <ligand>
        <name>UDP-N-acetyl-alpha-D-glucosamine</name>
        <dbReference type="ChEBI" id="CHEBI:57705"/>
    </ligand>
</feature>
<feature type="binding site" evidence="1">
    <location>
        <position position="172"/>
    </location>
    <ligand>
        <name>UDP-N-acetyl-alpha-D-glucosamine</name>
        <dbReference type="ChEBI" id="CHEBI:57705"/>
    </ligand>
</feature>
<feature type="binding site" evidence="1">
    <location>
        <position position="229"/>
    </location>
    <ligand>
        <name>Mg(2+)</name>
        <dbReference type="ChEBI" id="CHEBI:18420"/>
    </ligand>
</feature>
<feature type="binding site" evidence="1">
    <location>
        <position position="229"/>
    </location>
    <ligand>
        <name>UDP-N-acetyl-alpha-D-glucosamine</name>
        <dbReference type="ChEBI" id="CHEBI:57705"/>
    </ligand>
</feature>
<feature type="binding site" evidence="1">
    <location>
        <position position="318"/>
    </location>
    <ligand>
        <name>UDP-N-acetyl-alpha-D-glucosamine</name>
        <dbReference type="ChEBI" id="CHEBI:57705"/>
    </ligand>
</feature>
<feature type="binding site" evidence="1">
    <location>
        <position position="336"/>
    </location>
    <ligand>
        <name>UDP-N-acetyl-alpha-D-glucosamine</name>
        <dbReference type="ChEBI" id="CHEBI:57705"/>
    </ligand>
</feature>
<feature type="binding site" evidence="1">
    <location>
        <position position="351"/>
    </location>
    <ligand>
        <name>UDP-N-acetyl-alpha-D-glucosamine</name>
        <dbReference type="ChEBI" id="CHEBI:57705"/>
    </ligand>
</feature>
<feature type="binding site" evidence="1">
    <location>
        <position position="362"/>
    </location>
    <ligand>
        <name>UDP-N-acetyl-alpha-D-glucosamine</name>
        <dbReference type="ChEBI" id="CHEBI:57705"/>
    </ligand>
</feature>
<feature type="binding site" evidence="1">
    <location>
        <position position="365"/>
    </location>
    <ligand>
        <name>acetyl-CoA</name>
        <dbReference type="ChEBI" id="CHEBI:57288"/>
    </ligand>
</feature>
<feature type="binding site" evidence="1">
    <location>
        <begin position="371"/>
        <end position="372"/>
    </location>
    <ligand>
        <name>acetyl-CoA</name>
        <dbReference type="ChEBI" id="CHEBI:57288"/>
    </ligand>
</feature>
<feature type="binding site" evidence="1">
    <location>
        <position position="390"/>
    </location>
    <ligand>
        <name>acetyl-CoA</name>
        <dbReference type="ChEBI" id="CHEBI:57288"/>
    </ligand>
</feature>
<feature type="binding site" evidence="1">
    <location>
        <position position="408"/>
    </location>
    <ligand>
        <name>acetyl-CoA</name>
        <dbReference type="ChEBI" id="CHEBI:57288"/>
    </ligand>
</feature>
<feature type="binding site" evidence="1">
    <location>
        <position position="425"/>
    </location>
    <ligand>
        <name>acetyl-CoA</name>
        <dbReference type="ChEBI" id="CHEBI:57288"/>
    </ligand>
</feature>
<proteinExistence type="inferred from homology"/>
<comment type="function">
    <text evidence="1">Catalyzes the last two sequential reactions in the de novo biosynthetic pathway for UDP-N-acetylglucosamine (UDP-GlcNAc). The C-terminal domain catalyzes the transfer of acetyl group from acetyl coenzyme A to glucosamine-1-phosphate (GlcN-1-P) to produce N-acetylglucosamine-1-phosphate (GlcNAc-1-P), which is converted into UDP-GlcNAc by the transfer of uridine 5-monophosphate (from uridine 5-triphosphate), a reaction catalyzed by the N-terminal domain.</text>
</comment>
<comment type="catalytic activity">
    <reaction evidence="1">
        <text>alpha-D-glucosamine 1-phosphate + acetyl-CoA = N-acetyl-alpha-D-glucosamine 1-phosphate + CoA + H(+)</text>
        <dbReference type="Rhea" id="RHEA:13725"/>
        <dbReference type="ChEBI" id="CHEBI:15378"/>
        <dbReference type="ChEBI" id="CHEBI:57287"/>
        <dbReference type="ChEBI" id="CHEBI:57288"/>
        <dbReference type="ChEBI" id="CHEBI:57776"/>
        <dbReference type="ChEBI" id="CHEBI:58516"/>
        <dbReference type="EC" id="2.3.1.157"/>
    </reaction>
</comment>
<comment type="catalytic activity">
    <reaction evidence="1">
        <text>N-acetyl-alpha-D-glucosamine 1-phosphate + UTP + H(+) = UDP-N-acetyl-alpha-D-glucosamine + diphosphate</text>
        <dbReference type="Rhea" id="RHEA:13509"/>
        <dbReference type="ChEBI" id="CHEBI:15378"/>
        <dbReference type="ChEBI" id="CHEBI:33019"/>
        <dbReference type="ChEBI" id="CHEBI:46398"/>
        <dbReference type="ChEBI" id="CHEBI:57705"/>
        <dbReference type="ChEBI" id="CHEBI:57776"/>
        <dbReference type="EC" id="2.7.7.23"/>
    </reaction>
</comment>
<comment type="cofactor">
    <cofactor evidence="1">
        <name>Mg(2+)</name>
        <dbReference type="ChEBI" id="CHEBI:18420"/>
    </cofactor>
    <text evidence="1">Binds 1 Mg(2+) ion per subunit.</text>
</comment>
<comment type="pathway">
    <text evidence="1">Nucleotide-sugar biosynthesis; UDP-N-acetyl-alpha-D-glucosamine biosynthesis; N-acetyl-alpha-D-glucosamine 1-phosphate from alpha-D-glucosamine 6-phosphate (route II): step 2/2.</text>
</comment>
<comment type="pathway">
    <text evidence="1">Nucleotide-sugar biosynthesis; UDP-N-acetyl-alpha-D-glucosamine biosynthesis; UDP-N-acetyl-alpha-D-glucosamine from N-acetyl-alpha-D-glucosamine 1-phosphate: step 1/1.</text>
</comment>
<comment type="pathway">
    <text evidence="1">Bacterial outer membrane biogenesis; LPS lipid A biosynthesis.</text>
</comment>
<comment type="subunit">
    <text evidence="1">Homotrimer.</text>
</comment>
<comment type="subcellular location">
    <subcellularLocation>
        <location evidence="1">Cytoplasm</location>
    </subcellularLocation>
</comment>
<comment type="similarity">
    <text evidence="1">In the N-terminal section; belongs to the N-acetylglucosamine-1-phosphate uridyltransferase family.</text>
</comment>
<comment type="similarity">
    <text evidence="1">In the C-terminal section; belongs to the transferase hexapeptide repeat family.</text>
</comment>
<organism>
    <name type="scientific">Cereibacter sphaeroides (strain ATCC 17025 / ATH 2.4.3)</name>
    <name type="common">Rhodobacter sphaeroides</name>
    <dbReference type="NCBI Taxonomy" id="349102"/>
    <lineage>
        <taxon>Bacteria</taxon>
        <taxon>Pseudomonadati</taxon>
        <taxon>Pseudomonadota</taxon>
        <taxon>Alphaproteobacteria</taxon>
        <taxon>Rhodobacterales</taxon>
        <taxon>Paracoccaceae</taxon>
        <taxon>Cereibacter</taxon>
    </lineage>
</organism>
<accession>A4WU43</accession>
<dbReference type="EC" id="2.7.7.23" evidence="1"/>
<dbReference type="EC" id="2.3.1.157" evidence="1"/>
<dbReference type="EMBL" id="CP000661">
    <property type="protein sequence ID" value="ABP70907.1"/>
    <property type="molecule type" value="Genomic_DNA"/>
</dbReference>
<dbReference type="SMR" id="A4WU43"/>
<dbReference type="STRING" id="349102.Rsph17025_2016"/>
<dbReference type="KEGG" id="rsq:Rsph17025_2016"/>
<dbReference type="eggNOG" id="COG1207">
    <property type="taxonomic scope" value="Bacteria"/>
</dbReference>
<dbReference type="HOGENOM" id="CLU_029499_15_2_5"/>
<dbReference type="BioCyc" id="RSPH349102:G1G8M-2082-MONOMER"/>
<dbReference type="UniPathway" id="UPA00113">
    <property type="reaction ID" value="UER00532"/>
</dbReference>
<dbReference type="UniPathway" id="UPA00113">
    <property type="reaction ID" value="UER00533"/>
</dbReference>
<dbReference type="UniPathway" id="UPA00973"/>
<dbReference type="GO" id="GO:0005737">
    <property type="term" value="C:cytoplasm"/>
    <property type="evidence" value="ECO:0007669"/>
    <property type="project" value="UniProtKB-SubCell"/>
</dbReference>
<dbReference type="GO" id="GO:0016020">
    <property type="term" value="C:membrane"/>
    <property type="evidence" value="ECO:0007669"/>
    <property type="project" value="GOC"/>
</dbReference>
<dbReference type="GO" id="GO:0019134">
    <property type="term" value="F:glucosamine-1-phosphate N-acetyltransferase activity"/>
    <property type="evidence" value="ECO:0007669"/>
    <property type="project" value="UniProtKB-UniRule"/>
</dbReference>
<dbReference type="GO" id="GO:0000287">
    <property type="term" value="F:magnesium ion binding"/>
    <property type="evidence" value="ECO:0007669"/>
    <property type="project" value="UniProtKB-UniRule"/>
</dbReference>
<dbReference type="GO" id="GO:0003977">
    <property type="term" value="F:UDP-N-acetylglucosamine diphosphorylase activity"/>
    <property type="evidence" value="ECO:0007669"/>
    <property type="project" value="UniProtKB-UniRule"/>
</dbReference>
<dbReference type="GO" id="GO:0000902">
    <property type="term" value="P:cell morphogenesis"/>
    <property type="evidence" value="ECO:0007669"/>
    <property type="project" value="UniProtKB-UniRule"/>
</dbReference>
<dbReference type="GO" id="GO:0071555">
    <property type="term" value="P:cell wall organization"/>
    <property type="evidence" value="ECO:0007669"/>
    <property type="project" value="UniProtKB-KW"/>
</dbReference>
<dbReference type="GO" id="GO:0009245">
    <property type="term" value="P:lipid A biosynthetic process"/>
    <property type="evidence" value="ECO:0007669"/>
    <property type="project" value="UniProtKB-UniRule"/>
</dbReference>
<dbReference type="GO" id="GO:0009252">
    <property type="term" value="P:peptidoglycan biosynthetic process"/>
    <property type="evidence" value="ECO:0007669"/>
    <property type="project" value="UniProtKB-UniRule"/>
</dbReference>
<dbReference type="GO" id="GO:0008360">
    <property type="term" value="P:regulation of cell shape"/>
    <property type="evidence" value="ECO:0007669"/>
    <property type="project" value="UniProtKB-KW"/>
</dbReference>
<dbReference type="GO" id="GO:0006048">
    <property type="term" value="P:UDP-N-acetylglucosamine biosynthetic process"/>
    <property type="evidence" value="ECO:0007669"/>
    <property type="project" value="UniProtKB-UniPathway"/>
</dbReference>
<dbReference type="CDD" id="cd02540">
    <property type="entry name" value="GT2_GlmU_N_bac"/>
    <property type="match status" value="1"/>
</dbReference>
<dbReference type="CDD" id="cd03353">
    <property type="entry name" value="LbH_GlmU_C"/>
    <property type="match status" value="1"/>
</dbReference>
<dbReference type="Gene3D" id="2.160.10.10">
    <property type="entry name" value="Hexapeptide repeat proteins"/>
    <property type="match status" value="1"/>
</dbReference>
<dbReference type="Gene3D" id="3.90.550.10">
    <property type="entry name" value="Spore Coat Polysaccharide Biosynthesis Protein SpsA, Chain A"/>
    <property type="match status" value="1"/>
</dbReference>
<dbReference type="HAMAP" id="MF_01631">
    <property type="entry name" value="GlmU"/>
    <property type="match status" value="1"/>
</dbReference>
<dbReference type="InterPro" id="IPR005882">
    <property type="entry name" value="Bifunctional_GlmU"/>
</dbReference>
<dbReference type="InterPro" id="IPR050065">
    <property type="entry name" value="GlmU-like"/>
</dbReference>
<dbReference type="InterPro" id="IPR038009">
    <property type="entry name" value="GlmU_C_LbH"/>
</dbReference>
<dbReference type="InterPro" id="IPR018357">
    <property type="entry name" value="Hexapep_transf_CS"/>
</dbReference>
<dbReference type="InterPro" id="IPR025877">
    <property type="entry name" value="MobA-like_NTP_Trfase"/>
</dbReference>
<dbReference type="InterPro" id="IPR029044">
    <property type="entry name" value="Nucleotide-diphossugar_trans"/>
</dbReference>
<dbReference type="InterPro" id="IPR011004">
    <property type="entry name" value="Trimer_LpxA-like_sf"/>
</dbReference>
<dbReference type="NCBIfam" id="TIGR01173">
    <property type="entry name" value="glmU"/>
    <property type="match status" value="1"/>
</dbReference>
<dbReference type="NCBIfam" id="NF010933">
    <property type="entry name" value="PRK14353.1"/>
    <property type="match status" value="1"/>
</dbReference>
<dbReference type="PANTHER" id="PTHR43584:SF3">
    <property type="entry name" value="BIFUNCTIONAL PROTEIN GLMU"/>
    <property type="match status" value="1"/>
</dbReference>
<dbReference type="PANTHER" id="PTHR43584">
    <property type="entry name" value="NUCLEOTIDYL TRANSFERASE"/>
    <property type="match status" value="1"/>
</dbReference>
<dbReference type="Pfam" id="PF12804">
    <property type="entry name" value="NTP_transf_3"/>
    <property type="match status" value="1"/>
</dbReference>
<dbReference type="SUPFAM" id="SSF53448">
    <property type="entry name" value="Nucleotide-diphospho-sugar transferases"/>
    <property type="match status" value="1"/>
</dbReference>
<dbReference type="SUPFAM" id="SSF51161">
    <property type="entry name" value="Trimeric LpxA-like enzymes"/>
    <property type="match status" value="1"/>
</dbReference>
<dbReference type="PROSITE" id="PS00101">
    <property type="entry name" value="HEXAPEP_TRANSFERASES"/>
    <property type="match status" value="1"/>
</dbReference>
<name>GLMU_CERS5</name>